<name>HCP_BURL3</name>
<reference key="1">
    <citation type="submission" date="2005-10" db="EMBL/GenBank/DDBJ databases">
        <title>Complete sequence of chromosome 2 of Burkholderia sp. 383.</title>
        <authorList>
            <consortium name="US DOE Joint Genome Institute"/>
            <person name="Copeland A."/>
            <person name="Lucas S."/>
            <person name="Lapidus A."/>
            <person name="Barry K."/>
            <person name="Detter J.C."/>
            <person name="Glavina T."/>
            <person name="Hammon N."/>
            <person name="Israni S."/>
            <person name="Pitluck S."/>
            <person name="Chain P."/>
            <person name="Malfatti S."/>
            <person name="Shin M."/>
            <person name="Vergez L."/>
            <person name="Schmutz J."/>
            <person name="Larimer F."/>
            <person name="Land M."/>
            <person name="Kyrpides N."/>
            <person name="Lykidis A."/>
            <person name="Richardson P."/>
        </authorList>
    </citation>
    <scope>NUCLEOTIDE SEQUENCE [LARGE SCALE GENOMIC DNA]</scope>
    <source>
        <strain>ATCC 17760 / DSM 23089 / LMG 22485 / NCIMB 9086 / R18194 / 383</strain>
    </source>
</reference>
<comment type="function">
    <text evidence="1">Catalyzes the reduction of hydroxylamine to form NH(3) and H(2)O.</text>
</comment>
<comment type="catalytic activity">
    <reaction evidence="1">
        <text>A + NH4(+) + H2O = hydroxylamine + AH2 + H(+)</text>
        <dbReference type="Rhea" id="RHEA:22052"/>
        <dbReference type="ChEBI" id="CHEBI:13193"/>
        <dbReference type="ChEBI" id="CHEBI:15377"/>
        <dbReference type="ChEBI" id="CHEBI:15378"/>
        <dbReference type="ChEBI" id="CHEBI:15429"/>
        <dbReference type="ChEBI" id="CHEBI:17499"/>
        <dbReference type="ChEBI" id="CHEBI:28938"/>
        <dbReference type="EC" id="1.7.99.1"/>
    </reaction>
</comment>
<comment type="cofactor">
    <cofactor evidence="1">
        <name>[4Fe-4S] cluster</name>
        <dbReference type="ChEBI" id="CHEBI:49883"/>
    </cofactor>
    <text evidence="1">Binds 1 [4Fe-4S] cluster.</text>
</comment>
<comment type="cofactor">
    <cofactor evidence="1">
        <name>hybrid [4Fe-2O-2S] cluster</name>
        <dbReference type="ChEBI" id="CHEBI:60519"/>
    </cofactor>
    <text evidence="1">Binds 1 hybrid [4Fe-2O-2S] cluster.</text>
</comment>
<comment type="subcellular location">
    <subcellularLocation>
        <location evidence="1">Cytoplasm</location>
    </subcellularLocation>
</comment>
<comment type="similarity">
    <text evidence="1">Belongs to the HCP family.</text>
</comment>
<protein>
    <recommendedName>
        <fullName evidence="1">Hydroxylamine reductase</fullName>
        <ecNumber evidence="1">1.7.99.1</ecNumber>
    </recommendedName>
    <alternativeName>
        <fullName evidence="1">Hybrid-cluster protein</fullName>
        <shortName evidence="1">HCP</shortName>
    </alternativeName>
    <alternativeName>
        <fullName evidence="1">Prismane protein</fullName>
    </alternativeName>
</protein>
<feature type="chain" id="PRO_1000009146" description="Hydroxylamine reductase">
    <location>
        <begin position="1"/>
        <end position="555"/>
    </location>
</feature>
<feature type="binding site" evidence="1">
    <location>
        <position position="3"/>
    </location>
    <ligand>
        <name>[4Fe-4S] cluster</name>
        <dbReference type="ChEBI" id="CHEBI:49883"/>
    </ligand>
</feature>
<feature type="binding site" evidence="1">
    <location>
        <position position="6"/>
    </location>
    <ligand>
        <name>[4Fe-4S] cluster</name>
        <dbReference type="ChEBI" id="CHEBI:49883"/>
    </ligand>
</feature>
<feature type="binding site" evidence="1">
    <location>
        <position position="18"/>
    </location>
    <ligand>
        <name>[4Fe-4S] cluster</name>
        <dbReference type="ChEBI" id="CHEBI:49883"/>
    </ligand>
</feature>
<feature type="binding site" evidence="1">
    <location>
        <position position="25"/>
    </location>
    <ligand>
        <name>[4Fe-4S] cluster</name>
        <dbReference type="ChEBI" id="CHEBI:49883"/>
    </ligand>
</feature>
<feature type="binding site" evidence="1">
    <location>
        <position position="252"/>
    </location>
    <ligand>
        <name>hybrid [4Fe-2O-2S] cluster</name>
        <dbReference type="ChEBI" id="CHEBI:60519"/>
    </ligand>
</feature>
<feature type="binding site" evidence="1">
    <location>
        <position position="276"/>
    </location>
    <ligand>
        <name>hybrid [4Fe-2O-2S] cluster</name>
        <dbReference type="ChEBI" id="CHEBI:60519"/>
    </ligand>
</feature>
<feature type="binding site" evidence="1">
    <location>
        <position position="320"/>
    </location>
    <ligand>
        <name>hybrid [4Fe-2O-2S] cluster</name>
        <dbReference type="ChEBI" id="CHEBI:60519"/>
    </ligand>
</feature>
<feature type="binding site" description="via persulfide group" evidence="1">
    <location>
        <position position="407"/>
    </location>
    <ligand>
        <name>hybrid [4Fe-2O-2S] cluster</name>
        <dbReference type="ChEBI" id="CHEBI:60519"/>
    </ligand>
</feature>
<feature type="binding site" evidence="1">
    <location>
        <position position="435"/>
    </location>
    <ligand>
        <name>hybrid [4Fe-2O-2S] cluster</name>
        <dbReference type="ChEBI" id="CHEBI:60519"/>
    </ligand>
</feature>
<feature type="binding site" evidence="1">
    <location>
        <position position="460"/>
    </location>
    <ligand>
        <name>hybrid [4Fe-2O-2S] cluster</name>
        <dbReference type="ChEBI" id="CHEBI:60519"/>
    </ligand>
</feature>
<feature type="binding site" evidence="1">
    <location>
        <position position="494"/>
    </location>
    <ligand>
        <name>hybrid [4Fe-2O-2S] cluster</name>
        <dbReference type="ChEBI" id="CHEBI:60519"/>
    </ligand>
</feature>
<feature type="binding site" evidence="1">
    <location>
        <position position="496"/>
    </location>
    <ligand>
        <name>hybrid [4Fe-2O-2S] cluster</name>
        <dbReference type="ChEBI" id="CHEBI:60519"/>
    </ligand>
</feature>
<feature type="modified residue" description="Cysteine persulfide" evidence="1">
    <location>
        <position position="407"/>
    </location>
</feature>
<gene>
    <name evidence="1" type="primary">hcp</name>
    <name type="ordered locus">Bcep18194_B1121</name>
</gene>
<accession>Q397X6</accession>
<keyword id="KW-0004">4Fe-4S</keyword>
<keyword id="KW-0963">Cytoplasm</keyword>
<keyword id="KW-0408">Iron</keyword>
<keyword id="KW-0411">Iron-sulfur</keyword>
<keyword id="KW-0479">Metal-binding</keyword>
<keyword id="KW-0560">Oxidoreductase</keyword>
<organism>
    <name type="scientific">Burkholderia lata (strain ATCC 17760 / DSM 23089 / LMG 22485 / NCIMB 9086 / R18194 / 383)</name>
    <dbReference type="NCBI Taxonomy" id="482957"/>
    <lineage>
        <taxon>Bacteria</taxon>
        <taxon>Pseudomonadati</taxon>
        <taxon>Pseudomonadota</taxon>
        <taxon>Betaproteobacteria</taxon>
        <taxon>Burkholderiales</taxon>
        <taxon>Burkholderiaceae</taxon>
        <taxon>Burkholderia</taxon>
        <taxon>Burkholderia cepacia complex</taxon>
    </lineage>
</organism>
<proteinExistence type="inferred from homology"/>
<sequence length="555" mass="59033">MFCYQCEQTDRTGARPGCASAKGNCGKDATTADLQDLLVHAVKGIAQYGAIARAMGAPDRDADRFVLYAMFTTLTNVNFHAARFVALLREAAQMRDRVKAACDASARAAGTVVPAQHGPAMWQPADDLAGLLEQAARVGVDNGLDKVGADIVGLRALVLYGLKGVCAYAHHARVLGYERDDIYEGIEAALAFLARDPDDVNALLTQALGLGRLNLTVMELLDSANTGRFGAQQPTAVRVSPVAGKAILVSGHDLGDLHALLEQTAGTGIHVYTHGEMLPAHAYPVLKAFPHLVGNYGGAWQDQQSDFAHFPGPILMTSNCIIEPMPQYRQRIFTTGPVGWPGVRHLEHHDFSTLIRAAQALPGFPATAAEETITVGFGRHAVLGVADKVIDAVKAGQIRHFFLIGGCDGAAPGRNYYTEFAEQAPDDTVVMTLGCNKYRFNRHAFGDIGGIPRLLDVGQCNDSYSAIRIATALADAFECGVNDLPLSLVISWFEQKAAAVLLTLLALGLRNIRLGPTLPAFVTPGVLAVLVEQFGIQPIGDAGTDLAASLARHAA</sequence>
<evidence type="ECO:0000255" key="1">
    <source>
        <dbReference type="HAMAP-Rule" id="MF_00069"/>
    </source>
</evidence>
<dbReference type="EC" id="1.7.99.1" evidence="1"/>
<dbReference type="EMBL" id="CP000152">
    <property type="protein sequence ID" value="ABB11235.1"/>
    <property type="molecule type" value="Genomic_DNA"/>
</dbReference>
<dbReference type="RefSeq" id="WP_011354728.1">
    <property type="nucleotide sequence ID" value="NC_007511.1"/>
</dbReference>
<dbReference type="SMR" id="Q397X6"/>
<dbReference type="GeneID" id="45097473"/>
<dbReference type="KEGG" id="bur:Bcep18194_B1121"/>
<dbReference type="PATRIC" id="fig|482957.22.peg.4784"/>
<dbReference type="HOGENOM" id="CLU_038344_2_0_4"/>
<dbReference type="Proteomes" id="UP000002705">
    <property type="component" value="Chromosome 2"/>
</dbReference>
<dbReference type="GO" id="GO:0005737">
    <property type="term" value="C:cytoplasm"/>
    <property type="evidence" value="ECO:0007669"/>
    <property type="project" value="UniProtKB-SubCell"/>
</dbReference>
<dbReference type="GO" id="GO:0051539">
    <property type="term" value="F:4 iron, 4 sulfur cluster binding"/>
    <property type="evidence" value="ECO:0007669"/>
    <property type="project" value="UniProtKB-KW"/>
</dbReference>
<dbReference type="GO" id="GO:0050418">
    <property type="term" value="F:hydroxylamine reductase activity"/>
    <property type="evidence" value="ECO:0007669"/>
    <property type="project" value="UniProtKB-UniRule"/>
</dbReference>
<dbReference type="GO" id="GO:0046872">
    <property type="term" value="F:metal ion binding"/>
    <property type="evidence" value="ECO:0007669"/>
    <property type="project" value="UniProtKB-KW"/>
</dbReference>
<dbReference type="GO" id="GO:0004601">
    <property type="term" value="F:peroxidase activity"/>
    <property type="evidence" value="ECO:0007669"/>
    <property type="project" value="TreeGrafter"/>
</dbReference>
<dbReference type="GO" id="GO:0042542">
    <property type="term" value="P:response to hydrogen peroxide"/>
    <property type="evidence" value="ECO:0007669"/>
    <property type="project" value="TreeGrafter"/>
</dbReference>
<dbReference type="CDD" id="cd01914">
    <property type="entry name" value="HCP"/>
    <property type="match status" value="1"/>
</dbReference>
<dbReference type="FunFam" id="1.20.1270.20:FF:000001">
    <property type="entry name" value="Hydroxylamine reductase"/>
    <property type="match status" value="1"/>
</dbReference>
<dbReference type="FunFam" id="3.40.50.2030:FF:000001">
    <property type="entry name" value="Hydroxylamine reductase"/>
    <property type="match status" value="1"/>
</dbReference>
<dbReference type="FunFam" id="3.40.50.2030:FF:000002">
    <property type="entry name" value="Hydroxylamine reductase"/>
    <property type="match status" value="1"/>
</dbReference>
<dbReference type="Gene3D" id="1.20.1270.20">
    <property type="match status" value="2"/>
</dbReference>
<dbReference type="Gene3D" id="3.40.50.2030">
    <property type="match status" value="2"/>
</dbReference>
<dbReference type="HAMAP" id="MF_00069">
    <property type="entry name" value="Hydroxylam_reduct"/>
    <property type="match status" value="1"/>
</dbReference>
<dbReference type="InterPro" id="IPR004137">
    <property type="entry name" value="HCP/CODH"/>
</dbReference>
<dbReference type="InterPro" id="IPR010048">
    <property type="entry name" value="Hydroxylam_reduct"/>
</dbReference>
<dbReference type="InterPro" id="IPR016099">
    <property type="entry name" value="Prismane-like_a/b-sand"/>
</dbReference>
<dbReference type="InterPro" id="IPR011254">
    <property type="entry name" value="Prismane-like_sf"/>
</dbReference>
<dbReference type="InterPro" id="IPR016100">
    <property type="entry name" value="Prismane_a-bundle"/>
</dbReference>
<dbReference type="NCBIfam" id="TIGR01703">
    <property type="entry name" value="hybrid_clust"/>
    <property type="match status" value="1"/>
</dbReference>
<dbReference type="NCBIfam" id="NF003658">
    <property type="entry name" value="PRK05290.1"/>
    <property type="match status" value="1"/>
</dbReference>
<dbReference type="PANTHER" id="PTHR30109">
    <property type="entry name" value="HYDROXYLAMINE REDUCTASE"/>
    <property type="match status" value="1"/>
</dbReference>
<dbReference type="PANTHER" id="PTHR30109:SF0">
    <property type="entry name" value="HYDROXYLAMINE REDUCTASE"/>
    <property type="match status" value="1"/>
</dbReference>
<dbReference type="Pfam" id="PF03063">
    <property type="entry name" value="Prismane"/>
    <property type="match status" value="1"/>
</dbReference>
<dbReference type="PIRSF" id="PIRSF000076">
    <property type="entry name" value="HCP"/>
    <property type="match status" value="1"/>
</dbReference>
<dbReference type="SUPFAM" id="SSF56821">
    <property type="entry name" value="Prismane protein-like"/>
    <property type="match status" value="1"/>
</dbReference>